<name>GCH1_BLOPB</name>
<reference key="1">
    <citation type="journal article" date="2005" name="Genome Res.">
        <title>Genome sequence of Blochmannia pennsylvanicus indicates parallel evolutionary trends among bacterial mutualists of insects.</title>
        <authorList>
            <person name="Degnan P.H."/>
            <person name="Lazarus A.B."/>
            <person name="Wernegreen J.J."/>
        </authorList>
    </citation>
    <scope>NUCLEOTIDE SEQUENCE [LARGE SCALE GENOMIC DNA]</scope>
    <source>
        <strain>BPEN</strain>
    </source>
</reference>
<gene>
    <name evidence="2" type="primary">folE</name>
    <name type="ordered locus">BPEN_487</name>
</gene>
<dbReference type="EC" id="3.5.4.16" evidence="2"/>
<dbReference type="EMBL" id="CP000016">
    <property type="protein sequence ID" value="AAZ41102.1"/>
    <property type="molecule type" value="Genomic_DNA"/>
</dbReference>
<dbReference type="RefSeq" id="WP_011283013.1">
    <property type="nucleotide sequence ID" value="NC_007292.1"/>
</dbReference>
<dbReference type="SMR" id="Q492J7"/>
<dbReference type="STRING" id="291272.BPEN_487"/>
<dbReference type="KEGG" id="bpn:BPEN_487"/>
<dbReference type="eggNOG" id="COG0302">
    <property type="taxonomic scope" value="Bacteria"/>
</dbReference>
<dbReference type="HOGENOM" id="CLU_049768_3_2_6"/>
<dbReference type="OrthoDB" id="9801207at2"/>
<dbReference type="UniPathway" id="UPA00848">
    <property type="reaction ID" value="UER00151"/>
</dbReference>
<dbReference type="Proteomes" id="UP000007794">
    <property type="component" value="Chromosome"/>
</dbReference>
<dbReference type="GO" id="GO:0005737">
    <property type="term" value="C:cytoplasm"/>
    <property type="evidence" value="ECO:0007669"/>
    <property type="project" value="TreeGrafter"/>
</dbReference>
<dbReference type="GO" id="GO:0005525">
    <property type="term" value="F:GTP binding"/>
    <property type="evidence" value="ECO:0007669"/>
    <property type="project" value="UniProtKB-KW"/>
</dbReference>
<dbReference type="GO" id="GO:0003934">
    <property type="term" value="F:GTP cyclohydrolase I activity"/>
    <property type="evidence" value="ECO:0007669"/>
    <property type="project" value="UniProtKB-UniRule"/>
</dbReference>
<dbReference type="GO" id="GO:0008270">
    <property type="term" value="F:zinc ion binding"/>
    <property type="evidence" value="ECO:0007669"/>
    <property type="project" value="UniProtKB-UniRule"/>
</dbReference>
<dbReference type="GO" id="GO:0006730">
    <property type="term" value="P:one-carbon metabolic process"/>
    <property type="evidence" value="ECO:0007669"/>
    <property type="project" value="UniProtKB-UniRule"/>
</dbReference>
<dbReference type="GO" id="GO:0006729">
    <property type="term" value="P:tetrahydrobiopterin biosynthetic process"/>
    <property type="evidence" value="ECO:0007669"/>
    <property type="project" value="TreeGrafter"/>
</dbReference>
<dbReference type="GO" id="GO:0046654">
    <property type="term" value="P:tetrahydrofolate biosynthetic process"/>
    <property type="evidence" value="ECO:0007669"/>
    <property type="project" value="UniProtKB-UniRule"/>
</dbReference>
<dbReference type="FunFam" id="3.30.1130.10:FF:000001">
    <property type="entry name" value="GTP cyclohydrolase 1"/>
    <property type="match status" value="1"/>
</dbReference>
<dbReference type="Gene3D" id="1.10.286.10">
    <property type="match status" value="1"/>
</dbReference>
<dbReference type="Gene3D" id="3.30.1130.10">
    <property type="match status" value="1"/>
</dbReference>
<dbReference type="HAMAP" id="MF_00223">
    <property type="entry name" value="FolE"/>
    <property type="match status" value="1"/>
</dbReference>
<dbReference type="InterPro" id="IPR043133">
    <property type="entry name" value="GTP-CH-I_C/QueF"/>
</dbReference>
<dbReference type="InterPro" id="IPR043134">
    <property type="entry name" value="GTP-CH-I_N"/>
</dbReference>
<dbReference type="InterPro" id="IPR001474">
    <property type="entry name" value="GTP_CycHdrlase_I"/>
</dbReference>
<dbReference type="InterPro" id="IPR018234">
    <property type="entry name" value="GTP_CycHdrlase_I_CS"/>
</dbReference>
<dbReference type="InterPro" id="IPR020602">
    <property type="entry name" value="GTP_CycHdrlase_I_dom"/>
</dbReference>
<dbReference type="NCBIfam" id="TIGR00063">
    <property type="entry name" value="folE"/>
    <property type="match status" value="1"/>
</dbReference>
<dbReference type="NCBIfam" id="NF006824">
    <property type="entry name" value="PRK09347.1-1"/>
    <property type="match status" value="1"/>
</dbReference>
<dbReference type="NCBIfam" id="NF006826">
    <property type="entry name" value="PRK09347.1-3"/>
    <property type="match status" value="1"/>
</dbReference>
<dbReference type="PANTHER" id="PTHR11109:SF7">
    <property type="entry name" value="GTP CYCLOHYDROLASE 1"/>
    <property type="match status" value="1"/>
</dbReference>
<dbReference type="PANTHER" id="PTHR11109">
    <property type="entry name" value="GTP CYCLOHYDROLASE I"/>
    <property type="match status" value="1"/>
</dbReference>
<dbReference type="Pfam" id="PF01227">
    <property type="entry name" value="GTP_cyclohydroI"/>
    <property type="match status" value="1"/>
</dbReference>
<dbReference type="SUPFAM" id="SSF55620">
    <property type="entry name" value="Tetrahydrobiopterin biosynthesis enzymes-like"/>
    <property type="match status" value="1"/>
</dbReference>
<dbReference type="PROSITE" id="PS00859">
    <property type="entry name" value="GTP_CYCLOHYDROL_1_1"/>
    <property type="match status" value="1"/>
</dbReference>
<dbReference type="PROSITE" id="PS00860">
    <property type="entry name" value="GTP_CYCLOHYDROL_1_2"/>
    <property type="match status" value="1"/>
</dbReference>
<sequence>MSILTQEALLVRDALSVRGLENPLIELNINHKIRKRRIENHMRAIVHLLNLDLEHDSLLNTPKRIAKMYIEEIFSGLDYSNFPKIAIIQNTMQINEMITVRGINITSTCEHHFIVFNGKVTISYIPEKNVIGLSKINRIVQFFSKRPQLQERLTKQIFLALQTLLNTDNVAIFIDAVHYCVKARGIHDVSSTTTTTALGGLFESNTNTREEFLHAIMYCNH</sequence>
<keyword id="KW-0342">GTP-binding</keyword>
<keyword id="KW-0378">Hydrolase</keyword>
<keyword id="KW-0479">Metal-binding</keyword>
<keyword id="KW-0547">Nucleotide-binding</keyword>
<keyword id="KW-0554">One-carbon metabolism</keyword>
<keyword id="KW-1185">Reference proteome</keyword>
<keyword id="KW-0862">Zinc</keyword>
<comment type="catalytic activity">
    <reaction evidence="2">
        <text>GTP + H2O = 7,8-dihydroneopterin 3'-triphosphate + formate + H(+)</text>
        <dbReference type="Rhea" id="RHEA:17473"/>
        <dbReference type="ChEBI" id="CHEBI:15377"/>
        <dbReference type="ChEBI" id="CHEBI:15378"/>
        <dbReference type="ChEBI" id="CHEBI:15740"/>
        <dbReference type="ChEBI" id="CHEBI:37565"/>
        <dbReference type="ChEBI" id="CHEBI:58462"/>
        <dbReference type="EC" id="3.5.4.16"/>
    </reaction>
</comment>
<comment type="pathway">
    <text evidence="2">Cofactor biosynthesis; 7,8-dihydroneopterin triphosphate biosynthesis; 7,8-dihydroneopterin triphosphate from GTP: step 1/1.</text>
</comment>
<comment type="subunit">
    <text evidence="1">Toroid-shaped homodecamer, composed of two pentamers of five dimers.</text>
</comment>
<comment type="similarity">
    <text evidence="2">Belongs to the GTP cyclohydrolase I family.</text>
</comment>
<evidence type="ECO:0000250" key="1"/>
<evidence type="ECO:0000255" key="2">
    <source>
        <dbReference type="HAMAP-Rule" id="MF_00223"/>
    </source>
</evidence>
<accession>Q492J7</accession>
<protein>
    <recommendedName>
        <fullName evidence="2">GTP cyclohydrolase 1</fullName>
        <ecNumber evidence="2">3.5.4.16</ecNumber>
    </recommendedName>
    <alternativeName>
        <fullName evidence="2">GTP cyclohydrolase I</fullName>
        <shortName evidence="2">GTP-CH-I</shortName>
    </alternativeName>
</protein>
<proteinExistence type="inferred from homology"/>
<organism>
    <name type="scientific">Blochmanniella pennsylvanica (strain BPEN)</name>
    <dbReference type="NCBI Taxonomy" id="291272"/>
    <lineage>
        <taxon>Bacteria</taxon>
        <taxon>Pseudomonadati</taxon>
        <taxon>Pseudomonadota</taxon>
        <taxon>Gammaproteobacteria</taxon>
        <taxon>Enterobacterales</taxon>
        <taxon>Enterobacteriaceae</taxon>
        <taxon>ant endosymbionts</taxon>
        <taxon>Candidatus Blochmanniella</taxon>
    </lineage>
</organism>
<feature type="chain" id="PRO_1000043668" description="GTP cyclohydrolase 1">
    <location>
        <begin position="1"/>
        <end position="221"/>
    </location>
</feature>
<feature type="binding site" evidence="2">
    <location>
        <position position="109"/>
    </location>
    <ligand>
        <name>Zn(2+)</name>
        <dbReference type="ChEBI" id="CHEBI:29105"/>
    </ligand>
</feature>
<feature type="binding site" evidence="2">
    <location>
        <position position="112"/>
    </location>
    <ligand>
        <name>Zn(2+)</name>
        <dbReference type="ChEBI" id="CHEBI:29105"/>
    </ligand>
</feature>
<feature type="binding site" evidence="2">
    <location>
        <position position="180"/>
    </location>
    <ligand>
        <name>Zn(2+)</name>
        <dbReference type="ChEBI" id="CHEBI:29105"/>
    </ligand>
</feature>